<gene>
    <name type="primary">tufA</name>
</gene>
<feature type="chain" id="PRO_0000091455" description="Elongation factor Tu, cyanelle">
    <location>
        <begin position="1"/>
        <end position="409"/>
    </location>
</feature>
<feature type="domain" description="tr-type G">
    <location>
        <begin position="10"/>
        <end position="214"/>
    </location>
</feature>
<feature type="region of interest" description="G1" evidence="1">
    <location>
        <begin position="19"/>
        <end position="26"/>
    </location>
</feature>
<feature type="region of interest" description="G2" evidence="1">
    <location>
        <begin position="60"/>
        <end position="64"/>
    </location>
</feature>
<feature type="region of interest" description="G3" evidence="1">
    <location>
        <begin position="81"/>
        <end position="84"/>
    </location>
</feature>
<feature type="region of interest" description="G4" evidence="1">
    <location>
        <begin position="136"/>
        <end position="139"/>
    </location>
</feature>
<feature type="region of interest" description="G5" evidence="1">
    <location>
        <begin position="174"/>
        <end position="176"/>
    </location>
</feature>
<feature type="binding site" evidence="1">
    <location>
        <begin position="19"/>
        <end position="26"/>
    </location>
    <ligand>
        <name>GTP</name>
        <dbReference type="ChEBI" id="CHEBI:37565"/>
    </ligand>
</feature>
<feature type="binding site" evidence="2">
    <location>
        <position position="26"/>
    </location>
    <ligand>
        <name>Mg(2+)</name>
        <dbReference type="ChEBI" id="CHEBI:18420"/>
    </ligand>
</feature>
<feature type="binding site" evidence="1">
    <location>
        <begin position="81"/>
        <end position="85"/>
    </location>
    <ligand>
        <name>GTP</name>
        <dbReference type="ChEBI" id="CHEBI:37565"/>
    </ligand>
</feature>
<feature type="binding site" evidence="1">
    <location>
        <begin position="136"/>
        <end position="139"/>
    </location>
    <ligand>
        <name>GTP</name>
        <dbReference type="ChEBI" id="CHEBI:37565"/>
    </ligand>
</feature>
<feature type="sequence conflict" description="In Ref. 1; CAA36740." evidence="3" ref="1">
    <original>A</original>
    <variation>R</variation>
    <location>
        <position position="391"/>
    </location>
</feature>
<sequence>MARQKFDGNKPHVNIGTIGHVDHGKTTLTAAITTALASQGKGKARKYDEIDAAPEEKARGITINTAHVEYETEKRHYAHVDCPGHADYVKNMITGAAQMDGAILVVSAADGPMPQTREHILLAKQVGVPNMVVFLNKEDQIDDADLLELVELEVRELLSKYDFPGDQIPFVSGSALLALESLSSNPKLMRGEDKWVDKILALMDAVDEYIPTPERPIDKSFLMAIEDVFSITGRGTVATGRIERGAIKVGETVELVGLKDTKSTTVTGLEMFQKTLEEGMAGDNIGILLRGVQKTDIERGMVLAKPGSITPHTQFESEVYVLTKDEGGRHTPFFSGYRPQFYVRTTDVTGSIDAFTADDGSNAEMVMPGDRIKMTVSLVHPIAIEQGMRFAIREGGRTIGAGVVSKILK</sequence>
<dbReference type="EC" id="3.6.5.3" evidence="2"/>
<dbReference type="EMBL" id="X52497">
    <property type="protein sequence ID" value="CAA36740.1"/>
    <property type="molecule type" value="Genomic_DNA"/>
</dbReference>
<dbReference type="EMBL" id="U30821">
    <property type="protein sequence ID" value="AAA81238.1"/>
    <property type="molecule type" value="Genomic_DNA"/>
</dbReference>
<dbReference type="EMBL" id="M35206">
    <property type="protein sequence ID" value="AAA31701.1"/>
    <property type="molecule type" value="Genomic_DNA"/>
</dbReference>
<dbReference type="PIR" id="T06895">
    <property type="entry name" value="EFKTT"/>
</dbReference>
<dbReference type="RefSeq" id="NP_043207.1">
    <property type="nucleotide sequence ID" value="NC_001675.1"/>
</dbReference>
<dbReference type="SMR" id="P17245"/>
<dbReference type="GeneID" id="801571"/>
<dbReference type="GO" id="GO:0009842">
    <property type="term" value="C:cyanelle"/>
    <property type="evidence" value="ECO:0007669"/>
    <property type="project" value="UniProtKB-SubCell"/>
</dbReference>
<dbReference type="GO" id="GO:0005829">
    <property type="term" value="C:cytosol"/>
    <property type="evidence" value="ECO:0007669"/>
    <property type="project" value="TreeGrafter"/>
</dbReference>
<dbReference type="GO" id="GO:0005525">
    <property type="term" value="F:GTP binding"/>
    <property type="evidence" value="ECO:0007669"/>
    <property type="project" value="UniProtKB-KW"/>
</dbReference>
<dbReference type="GO" id="GO:0003924">
    <property type="term" value="F:GTPase activity"/>
    <property type="evidence" value="ECO:0007669"/>
    <property type="project" value="InterPro"/>
</dbReference>
<dbReference type="GO" id="GO:0003746">
    <property type="term" value="F:translation elongation factor activity"/>
    <property type="evidence" value="ECO:0007669"/>
    <property type="project" value="UniProtKB-KW"/>
</dbReference>
<dbReference type="CDD" id="cd01884">
    <property type="entry name" value="EF_Tu"/>
    <property type="match status" value="1"/>
</dbReference>
<dbReference type="CDD" id="cd03697">
    <property type="entry name" value="EFTU_II"/>
    <property type="match status" value="1"/>
</dbReference>
<dbReference type="CDD" id="cd03707">
    <property type="entry name" value="EFTU_III"/>
    <property type="match status" value="1"/>
</dbReference>
<dbReference type="FunFam" id="2.40.30.10:FF:000001">
    <property type="entry name" value="Elongation factor Tu"/>
    <property type="match status" value="1"/>
</dbReference>
<dbReference type="FunFam" id="2.40.30.10:FF:000046">
    <property type="entry name" value="Elongation factor Tu"/>
    <property type="match status" value="1"/>
</dbReference>
<dbReference type="FunFam" id="3.40.50.300:FF:000003">
    <property type="entry name" value="Elongation factor Tu"/>
    <property type="match status" value="1"/>
</dbReference>
<dbReference type="Gene3D" id="3.40.50.300">
    <property type="entry name" value="P-loop containing nucleotide triphosphate hydrolases"/>
    <property type="match status" value="1"/>
</dbReference>
<dbReference type="Gene3D" id="2.40.30.10">
    <property type="entry name" value="Translation factors"/>
    <property type="match status" value="2"/>
</dbReference>
<dbReference type="HAMAP" id="MF_00118_B">
    <property type="entry name" value="EF_Tu_B"/>
    <property type="match status" value="1"/>
</dbReference>
<dbReference type="InterPro" id="IPR041709">
    <property type="entry name" value="EF-Tu_GTP-bd"/>
</dbReference>
<dbReference type="InterPro" id="IPR050055">
    <property type="entry name" value="EF-Tu_GTPase"/>
</dbReference>
<dbReference type="InterPro" id="IPR004161">
    <property type="entry name" value="EFTu-like_2"/>
</dbReference>
<dbReference type="InterPro" id="IPR033720">
    <property type="entry name" value="EFTU_2"/>
</dbReference>
<dbReference type="InterPro" id="IPR031157">
    <property type="entry name" value="G_TR_CS"/>
</dbReference>
<dbReference type="InterPro" id="IPR027417">
    <property type="entry name" value="P-loop_NTPase"/>
</dbReference>
<dbReference type="InterPro" id="IPR005225">
    <property type="entry name" value="Small_GTP-bd"/>
</dbReference>
<dbReference type="InterPro" id="IPR000795">
    <property type="entry name" value="T_Tr_GTP-bd_dom"/>
</dbReference>
<dbReference type="InterPro" id="IPR009000">
    <property type="entry name" value="Transl_B-barrel_sf"/>
</dbReference>
<dbReference type="InterPro" id="IPR009001">
    <property type="entry name" value="Transl_elong_EF1A/Init_IF2_C"/>
</dbReference>
<dbReference type="InterPro" id="IPR004541">
    <property type="entry name" value="Transl_elong_EFTu/EF1A_bac/org"/>
</dbReference>
<dbReference type="InterPro" id="IPR004160">
    <property type="entry name" value="Transl_elong_EFTu/EF1A_C"/>
</dbReference>
<dbReference type="NCBIfam" id="TIGR00485">
    <property type="entry name" value="EF-Tu"/>
    <property type="match status" value="1"/>
</dbReference>
<dbReference type="NCBIfam" id="NF000766">
    <property type="entry name" value="PRK00049.1"/>
    <property type="match status" value="1"/>
</dbReference>
<dbReference type="NCBIfam" id="NF009372">
    <property type="entry name" value="PRK12735.1"/>
    <property type="match status" value="1"/>
</dbReference>
<dbReference type="NCBIfam" id="NF009373">
    <property type="entry name" value="PRK12736.1"/>
    <property type="match status" value="1"/>
</dbReference>
<dbReference type="NCBIfam" id="TIGR00231">
    <property type="entry name" value="small_GTP"/>
    <property type="match status" value="1"/>
</dbReference>
<dbReference type="PANTHER" id="PTHR43721:SF22">
    <property type="entry name" value="ELONGATION FACTOR TU, MITOCHONDRIAL"/>
    <property type="match status" value="1"/>
</dbReference>
<dbReference type="PANTHER" id="PTHR43721">
    <property type="entry name" value="ELONGATION FACTOR TU-RELATED"/>
    <property type="match status" value="1"/>
</dbReference>
<dbReference type="Pfam" id="PF00009">
    <property type="entry name" value="GTP_EFTU"/>
    <property type="match status" value="1"/>
</dbReference>
<dbReference type="Pfam" id="PF03144">
    <property type="entry name" value="GTP_EFTU_D2"/>
    <property type="match status" value="1"/>
</dbReference>
<dbReference type="Pfam" id="PF03143">
    <property type="entry name" value="GTP_EFTU_D3"/>
    <property type="match status" value="1"/>
</dbReference>
<dbReference type="PRINTS" id="PR00315">
    <property type="entry name" value="ELONGATNFCT"/>
</dbReference>
<dbReference type="SUPFAM" id="SSF50465">
    <property type="entry name" value="EF-Tu/eEF-1alpha/eIF2-gamma C-terminal domain"/>
    <property type="match status" value="1"/>
</dbReference>
<dbReference type="SUPFAM" id="SSF52540">
    <property type="entry name" value="P-loop containing nucleoside triphosphate hydrolases"/>
    <property type="match status" value="1"/>
</dbReference>
<dbReference type="SUPFAM" id="SSF50447">
    <property type="entry name" value="Translation proteins"/>
    <property type="match status" value="1"/>
</dbReference>
<dbReference type="PROSITE" id="PS00301">
    <property type="entry name" value="G_TR_1"/>
    <property type="match status" value="1"/>
</dbReference>
<dbReference type="PROSITE" id="PS51722">
    <property type="entry name" value="G_TR_2"/>
    <property type="match status" value="1"/>
</dbReference>
<organism>
    <name type="scientific">Cyanophora paradoxa</name>
    <dbReference type="NCBI Taxonomy" id="2762"/>
    <lineage>
        <taxon>Eukaryota</taxon>
        <taxon>Glaucocystophyceae</taxon>
        <taxon>Cyanophoraceae</taxon>
        <taxon>Cyanophora</taxon>
    </lineage>
</organism>
<comment type="function">
    <text evidence="2">GTP hydrolase that promotes the GTP-dependent binding of aminoacyl-tRNA to the A-site of ribosomes during protein biosynthesis.</text>
</comment>
<comment type="catalytic activity">
    <reaction evidence="2">
        <text>GTP + H2O = GDP + phosphate + H(+)</text>
        <dbReference type="Rhea" id="RHEA:19669"/>
        <dbReference type="ChEBI" id="CHEBI:15377"/>
        <dbReference type="ChEBI" id="CHEBI:15378"/>
        <dbReference type="ChEBI" id="CHEBI:37565"/>
        <dbReference type="ChEBI" id="CHEBI:43474"/>
        <dbReference type="ChEBI" id="CHEBI:58189"/>
        <dbReference type="EC" id="3.6.5.3"/>
    </reaction>
    <physiologicalReaction direction="left-to-right" evidence="2">
        <dbReference type="Rhea" id="RHEA:19670"/>
    </physiologicalReaction>
</comment>
<comment type="subcellular location">
    <subcellularLocation>
        <location>Plastid</location>
        <location>Cyanelle</location>
    </subcellularLocation>
</comment>
<comment type="similarity">
    <text evidence="3">Belongs to the TRAFAC class translation factor GTPase superfamily. Classic translation factor GTPase family. EF-Tu/EF-1A subfamily.</text>
</comment>
<proteinExistence type="inferred from homology"/>
<geneLocation type="cyanelle"/>
<protein>
    <recommendedName>
        <fullName>Elongation factor Tu, cyanelle</fullName>
        <shortName>EF-Tu</shortName>
        <ecNumber evidence="2">3.6.5.3</ecNumber>
    </recommendedName>
</protein>
<keyword id="KW-0194">Cyanelle</keyword>
<keyword id="KW-0251">Elongation factor</keyword>
<keyword id="KW-0342">GTP-binding</keyword>
<keyword id="KW-0378">Hydrolase</keyword>
<keyword id="KW-0460">Magnesium</keyword>
<keyword id="KW-0479">Metal-binding</keyword>
<keyword id="KW-0547">Nucleotide-binding</keyword>
<keyword id="KW-0934">Plastid</keyword>
<keyword id="KW-0648">Protein biosynthesis</keyword>
<evidence type="ECO:0000250" key="1"/>
<evidence type="ECO:0000255" key="2">
    <source>
        <dbReference type="HAMAP-Rule" id="MF_00118"/>
    </source>
</evidence>
<evidence type="ECO:0000305" key="3"/>
<name>EFTU_CYAPA</name>
<accession>P17245</accession>
<reference key="1">
    <citation type="journal article" date="1990" name="Plant Mol. Biol.">
        <title>The cyanelle str operon from Cyanophora paradoxa: sequence analysis and phylogenetic implications.</title>
        <authorList>
            <person name="Kraus M."/>
            <person name="Goetz M."/>
            <person name="Loeffelhardt W."/>
        </authorList>
    </citation>
    <scope>NUCLEOTIDE SEQUENCE [GENOMIC DNA]</scope>
    <source>
        <strain>UTEX LB 555 / Pringsheim</strain>
    </source>
</reference>
<reference key="2">
    <citation type="journal article" date="1995" name="Plant Mol. Biol. Rep.">
        <title>Nucleotide sequence of the cyanelle DNA from Cyanophora paradoxa.</title>
        <authorList>
            <person name="Stirewalt V.L."/>
            <person name="Michalowski C.B."/>
            <person name="Loeffelhardt W."/>
            <person name="Bohnert H.J."/>
            <person name="Bryant D.A."/>
        </authorList>
    </citation>
    <scope>NUCLEOTIDE SEQUENCE [LARGE SCALE GENOMIC DNA]</scope>
    <source>
        <strain>UTEX LB 555 / Pringsheim</strain>
    </source>
</reference>
<reference key="3">
    <citation type="book" date="1997" name="Eukaryotism and symbiosis">
        <title>The complete sequence of the cyanelle genome of Cyanophora paradoxa: the genetic complexity of a primitive plastid.</title>
        <editorList>
            <person name="Schenk H.E.A."/>
            <person name="Herrmann R."/>
            <person name="Jeon K.W."/>
            <person name="Mueller N.E."/>
            <person name="Schwemmler W."/>
        </editorList>
        <authorList>
            <person name="Loeffelhardt W."/>
            <person name="Stirewalt V.L."/>
            <person name="Michalowski C.B."/>
            <person name="Annarella M."/>
            <person name="Farley J.Y."/>
            <person name="Schluchter W.M."/>
            <person name="Chung S."/>
            <person name="Newmann-Spallart C."/>
            <person name="Steiner J.M."/>
            <person name="Jakowitsch J."/>
            <person name="Bohnert H.J."/>
            <person name="Bryant D.A."/>
        </authorList>
    </citation>
    <scope>NUCLEOTIDE SEQUENCE [LARGE SCALE GENOMIC DNA]</scope>
    <source>
        <strain>UTEX LB 555 / Pringsheim</strain>
    </source>
</reference>
<reference key="4">
    <citation type="journal article" date="1991" name="Gene">
        <title>Ferredoxin and ribosomal protein S10 are encoded on the cyanelle genome of Cyanophora paradoxa.</title>
        <authorList>
            <person name="Bryant D.A."/>
            <person name="Schluchter W.M."/>
            <person name="Stirewalt V.L."/>
        </authorList>
    </citation>
    <scope>NUCLEOTIDE SEQUENCE [GENOMIC DNA] OF 357-409</scope>
</reference>